<sequence>MAGRELSHLQQLEAESIQIIREVAAEFDNPVMLYSIGKDSSVMLHLARKAFYPGKIPFPLLHVDTGWKFKEMIAFRDAQAKKFGFELLTHINPEGLAQGINPFDHGSAKHTDIMKTQGLKQALNQYGFDAAFGGARRDEEKSRAKERVYSFRDRHHRWDPKNQRPELWRTYNGAVNKGESIRVFPLSNWTELDIWQYIYQENIELVPLYFAAKRQVVERGGQLIMADDERMKLAEGEQFKEELVRFRTLGCYPLTAAMHSEADSLEKIIEEMLLTRSSERQGRLIDSDQSASMEQKKRQGYF</sequence>
<reference key="1">
    <citation type="submission" date="2008-12" db="EMBL/GenBank/DDBJ databases">
        <title>Complete sequence of chromosome of Shewanella baltica OS223.</title>
        <authorList>
            <consortium name="US DOE Joint Genome Institute"/>
            <person name="Lucas S."/>
            <person name="Copeland A."/>
            <person name="Lapidus A."/>
            <person name="Glavina del Rio T."/>
            <person name="Dalin E."/>
            <person name="Tice H."/>
            <person name="Bruce D."/>
            <person name="Goodwin L."/>
            <person name="Pitluck S."/>
            <person name="Chertkov O."/>
            <person name="Meincke L."/>
            <person name="Brettin T."/>
            <person name="Detter J.C."/>
            <person name="Han C."/>
            <person name="Kuske C.R."/>
            <person name="Larimer F."/>
            <person name="Land M."/>
            <person name="Hauser L."/>
            <person name="Kyrpides N."/>
            <person name="Ovchinnikova G."/>
            <person name="Brettar I."/>
            <person name="Rodrigues J."/>
            <person name="Konstantinidis K."/>
            <person name="Tiedje J."/>
        </authorList>
    </citation>
    <scope>NUCLEOTIDE SEQUENCE [LARGE SCALE GENOMIC DNA]</scope>
    <source>
        <strain>OS223</strain>
    </source>
</reference>
<dbReference type="EC" id="2.7.7.4" evidence="1"/>
<dbReference type="EMBL" id="CP001252">
    <property type="protein sequence ID" value="ACK45472.1"/>
    <property type="molecule type" value="Genomic_DNA"/>
</dbReference>
<dbReference type="RefSeq" id="WP_012586925.1">
    <property type="nucleotide sequence ID" value="NC_011663.1"/>
</dbReference>
<dbReference type="SMR" id="B8EE60"/>
<dbReference type="KEGG" id="sbp:Sbal223_0954"/>
<dbReference type="HOGENOM" id="CLU_043026_0_0_6"/>
<dbReference type="UniPathway" id="UPA00140">
    <property type="reaction ID" value="UER00204"/>
</dbReference>
<dbReference type="Proteomes" id="UP000002507">
    <property type="component" value="Chromosome"/>
</dbReference>
<dbReference type="GO" id="GO:0005524">
    <property type="term" value="F:ATP binding"/>
    <property type="evidence" value="ECO:0007669"/>
    <property type="project" value="UniProtKB-KW"/>
</dbReference>
<dbReference type="GO" id="GO:0004781">
    <property type="term" value="F:sulfate adenylyltransferase (ATP) activity"/>
    <property type="evidence" value="ECO:0007669"/>
    <property type="project" value="UniProtKB-UniRule"/>
</dbReference>
<dbReference type="GO" id="GO:0070814">
    <property type="term" value="P:hydrogen sulfide biosynthetic process"/>
    <property type="evidence" value="ECO:0007669"/>
    <property type="project" value="UniProtKB-UniRule"/>
</dbReference>
<dbReference type="GO" id="GO:0000103">
    <property type="term" value="P:sulfate assimilation"/>
    <property type="evidence" value="ECO:0007669"/>
    <property type="project" value="UniProtKB-UniRule"/>
</dbReference>
<dbReference type="CDD" id="cd23946">
    <property type="entry name" value="Sulfate_adenylyltransferase_2"/>
    <property type="match status" value="1"/>
</dbReference>
<dbReference type="FunFam" id="3.40.50.620:FF:000002">
    <property type="entry name" value="Sulfate adenylyltransferase subunit 2"/>
    <property type="match status" value="1"/>
</dbReference>
<dbReference type="Gene3D" id="3.40.50.620">
    <property type="entry name" value="HUPs"/>
    <property type="match status" value="1"/>
</dbReference>
<dbReference type="HAMAP" id="MF_00064">
    <property type="entry name" value="Sulf_adenylyltr_sub2"/>
    <property type="match status" value="1"/>
</dbReference>
<dbReference type="InterPro" id="IPR002500">
    <property type="entry name" value="PAPS_reduct_dom"/>
</dbReference>
<dbReference type="InterPro" id="IPR014729">
    <property type="entry name" value="Rossmann-like_a/b/a_fold"/>
</dbReference>
<dbReference type="InterPro" id="IPR011784">
    <property type="entry name" value="SO4_adenylTrfase_ssu"/>
</dbReference>
<dbReference type="InterPro" id="IPR050128">
    <property type="entry name" value="Sulfate_adenylyltrnsfr_sub2"/>
</dbReference>
<dbReference type="NCBIfam" id="TIGR02039">
    <property type="entry name" value="CysD"/>
    <property type="match status" value="1"/>
</dbReference>
<dbReference type="NCBIfam" id="NF003587">
    <property type="entry name" value="PRK05253.1"/>
    <property type="match status" value="1"/>
</dbReference>
<dbReference type="NCBIfam" id="NF009214">
    <property type="entry name" value="PRK12563.1"/>
    <property type="match status" value="1"/>
</dbReference>
<dbReference type="PANTHER" id="PTHR43196">
    <property type="entry name" value="SULFATE ADENYLYLTRANSFERASE SUBUNIT 2"/>
    <property type="match status" value="1"/>
</dbReference>
<dbReference type="PANTHER" id="PTHR43196:SF1">
    <property type="entry name" value="SULFATE ADENYLYLTRANSFERASE SUBUNIT 2"/>
    <property type="match status" value="1"/>
</dbReference>
<dbReference type="Pfam" id="PF01507">
    <property type="entry name" value="PAPS_reduct"/>
    <property type="match status" value="1"/>
</dbReference>
<dbReference type="PIRSF" id="PIRSF002936">
    <property type="entry name" value="CysDAde_trans"/>
    <property type="match status" value="1"/>
</dbReference>
<dbReference type="SUPFAM" id="SSF52402">
    <property type="entry name" value="Adenine nucleotide alpha hydrolases-like"/>
    <property type="match status" value="1"/>
</dbReference>
<organism>
    <name type="scientific">Shewanella baltica (strain OS223)</name>
    <dbReference type="NCBI Taxonomy" id="407976"/>
    <lineage>
        <taxon>Bacteria</taxon>
        <taxon>Pseudomonadati</taxon>
        <taxon>Pseudomonadota</taxon>
        <taxon>Gammaproteobacteria</taxon>
        <taxon>Alteromonadales</taxon>
        <taxon>Shewanellaceae</taxon>
        <taxon>Shewanella</taxon>
    </lineage>
</organism>
<protein>
    <recommendedName>
        <fullName evidence="1">Sulfate adenylyltransferase subunit 2</fullName>
        <ecNumber evidence="1">2.7.7.4</ecNumber>
    </recommendedName>
    <alternativeName>
        <fullName evidence="1">ATP-sulfurylase small subunit</fullName>
    </alternativeName>
    <alternativeName>
        <fullName evidence="1">Sulfate adenylate transferase</fullName>
        <shortName evidence="1">SAT</shortName>
    </alternativeName>
</protein>
<evidence type="ECO:0000255" key="1">
    <source>
        <dbReference type="HAMAP-Rule" id="MF_00064"/>
    </source>
</evidence>
<evidence type="ECO:0000256" key="2">
    <source>
        <dbReference type="SAM" id="MobiDB-lite"/>
    </source>
</evidence>
<gene>
    <name evidence="1" type="primary">cysD</name>
    <name type="ordered locus">Sbal223_0954</name>
</gene>
<feature type="chain" id="PRO_1000117947" description="Sulfate adenylyltransferase subunit 2">
    <location>
        <begin position="1"/>
        <end position="302"/>
    </location>
</feature>
<feature type="region of interest" description="Disordered" evidence="2">
    <location>
        <begin position="280"/>
        <end position="302"/>
    </location>
</feature>
<comment type="function">
    <text evidence="1">With CysN forms the ATP sulfurylase (ATPS) that catalyzes the adenylation of sulfate producing adenosine 5'-phosphosulfate (APS) and diphosphate, the first enzymatic step in sulfur assimilation pathway. APS synthesis involves the formation of a high-energy phosphoric-sulfuric acid anhydride bond driven by GTP hydrolysis by CysN coupled to ATP hydrolysis by CysD.</text>
</comment>
<comment type="catalytic activity">
    <reaction evidence="1">
        <text>sulfate + ATP + H(+) = adenosine 5'-phosphosulfate + diphosphate</text>
        <dbReference type="Rhea" id="RHEA:18133"/>
        <dbReference type="ChEBI" id="CHEBI:15378"/>
        <dbReference type="ChEBI" id="CHEBI:16189"/>
        <dbReference type="ChEBI" id="CHEBI:30616"/>
        <dbReference type="ChEBI" id="CHEBI:33019"/>
        <dbReference type="ChEBI" id="CHEBI:58243"/>
        <dbReference type="EC" id="2.7.7.4"/>
    </reaction>
</comment>
<comment type="pathway">
    <text evidence="1">Sulfur metabolism; hydrogen sulfide biosynthesis; sulfite from sulfate: step 1/3.</text>
</comment>
<comment type="subunit">
    <text evidence="1">Heterodimer composed of CysD, the smaller subunit, and CysN.</text>
</comment>
<comment type="similarity">
    <text evidence="1">Belongs to the PAPS reductase family. CysD subfamily.</text>
</comment>
<keyword id="KW-0067">ATP-binding</keyword>
<keyword id="KW-0547">Nucleotide-binding</keyword>
<keyword id="KW-0548">Nucleotidyltransferase</keyword>
<keyword id="KW-0808">Transferase</keyword>
<accession>B8EE60</accession>
<proteinExistence type="inferred from homology"/>
<name>CYSD_SHEB2</name>